<protein>
    <recommendedName>
        <fullName evidence="1">Glucose-6-phosphate isomerase</fullName>
        <shortName evidence="1">GPI</shortName>
        <ecNumber evidence="1">5.3.1.9</ecNumber>
    </recommendedName>
    <alternativeName>
        <fullName evidence="1">Phosphoglucose isomerase</fullName>
        <shortName evidence="1">PGI</shortName>
    </alternativeName>
    <alternativeName>
        <fullName evidence="1">Phosphohexose isomerase</fullName>
        <shortName evidence="1">PHI</shortName>
    </alternativeName>
</protein>
<name>G6PI_ALKMQ</name>
<accession>A6TN07</accession>
<feature type="chain" id="PRO_1000060391" description="Glucose-6-phosphate isomerase">
    <location>
        <begin position="1"/>
        <end position="450"/>
    </location>
</feature>
<feature type="active site" description="Proton donor" evidence="1">
    <location>
        <position position="290"/>
    </location>
</feature>
<feature type="active site" evidence="1">
    <location>
        <position position="311"/>
    </location>
</feature>
<feature type="active site" evidence="1">
    <location>
        <position position="425"/>
    </location>
</feature>
<dbReference type="EC" id="5.3.1.9" evidence="1"/>
<dbReference type="EMBL" id="CP000724">
    <property type="protein sequence ID" value="ABR47575.1"/>
    <property type="molecule type" value="Genomic_DNA"/>
</dbReference>
<dbReference type="RefSeq" id="WP_012062616.1">
    <property type="nucleotide sequence ID" value="NC_009633.1"/>
</dbReference>
<dbReference type="SMR" id="A6TN07"/>
<dbReference type="STRING" id="293826.Amet_1375"/>
<dbReference type="KEGG" id="amt:Amet_1375"/>
<dbReference type="eggNOG" id="COG0166">
    <property type="taxonomic scope" value="Bacteria"/>
</dbReference>
<dbReference type="HOGENOM" id="CLU_037303_0_1_9"/>
<dbReference type="OrthoDB" id="140919at2"/>
<dbReference type="UniPathway" id="UPA00109">
    <property type="reaction ID" value="UER00181"/>
</dbReference>
<dbReference type="UniPathway" id="UPA00138"/>
<dbReference type="Proteomes" id="UP000001572">
    <property type="component" value="Chromosome"/>
</dbReference>
<dbReference type="GO" id="GO:0005829">
    <property type="term" value="C:cytosol"/>
    <property type="evidence" value="ECO:0007669"/>
    <property type="project" value="TreeGrafter"/>
</dbReference>
<dbReference type="GO" id="GO:0097367">
    <property type="term" value="F:carbohydrate derivative binding"/>
    <property type="evidence" value="ECO:0007669"/>
    <property type="project" value="InterPro"/>
</dbReference>
<dbReference type="GO" id="GO:0004347">
    <property type="term" value="F:glucose-6-phosphate isomerase activity"/>
    <property type="evidence" value="ECO:0007669"/>
    <property type="project" value="UniProtKB-UniRule"/>
</dbReference>
<dbReference type="GO" id="GO:0048029">
    <property type="term" value="F:monosaccharide binding"/>
    <property type="evidence" value="ECO:0007669"/>
    <property type="project" value="TreeGrafter"/>
</dbReference>
<dbReference type="GO" id="GO:0006094">
    <property type="term" value="P:gluconeogenesis"/>
    <property type="evidence" value="ECO:0007669"/>
    <property type="project" value="UniProtKB-UniRule"/>
</dbReference>
<dbReference type="GO" id="GO:0051156">
    <property type="term" value="P:glucose 6-phosphate metabolic process"/>
    <property type="evidence" value="ECO:0007669"/>
    <property type="project" value="TreeGrafter"/>
</dbReference>
<dbReference type="GO" id="GO:0006096">
    <property type="term" value="P:glycolytic process"/>
    <property type="evidence" value="ECO:0007669"/>
    <property type="project" value="UniProtKB-UniRule"/>
</dbReference>
<dbReference type="CDD" id="cd05015">
    <property type="entry name" value="SIS_PGI_1"/>
    <property type="match status" value="1"/>
</dbReference>
<dbReference type="CDD" id="cd05016">
    <property type="entry name" value="SIS_PGI_2"/>
    <property type="match status" value="1"/>
</dbReference>
<dbReference type="FunFam" id="3.40.50.10490:FF:000015">
    <property type="entry name" value="Glucose-6-phosphate isomerase"/>
    <property type="match status" value="1"/>
</dbReference>
<dbReference type="FunFam" id="3.40.50.10490:FF:000016">
    <property type="entry name" value="Glucose-6-phosphate isomerase"/>
    <property type="match status" value="1"/>
</dbReference>
<dbReference type="Gene3D" id="3.40.50.10490">
    <property type="entry name" value="Glucose-6-phosphate isomerase like protein, domain 1"/>
    <property type="match status" value="3"/>
</dbReference>
<dbReference type="HAMAP" id="MF_00473">
    <property type="entry name" value="G6P_isomerase"/>
    <property type="match status" value="1"/>
</dbReference>
<dbReference type="InterPro" id="IPR001672">
    <property type="entry name" value="G6P_Isomerase"/>
</dbReference>
<dbReference type="InterPro" id="IPR018189">
    <property type="entry name" value="Phosphoglucose_isomerase_CS"/>
</dbReference>
<dbReference type="InterPro" id="IPR046348">
    <property type="entry name" value="SIS_dom_sf"/>
</dbReference>
<dbReference type="InterPro" id="IPR035476">
    <property type="entry name" value="SIS_PGI_1"/>
</dbReference>
<dbReference type="InterPro" id="IPR035482">
    <property type="entry name" value="SIS_PGI_2"/>
</dbReference>
<dbReference type="NCBIfam" id="NF010697">
    <property type="entry name" value="PRK14097.1"/>
    <property type="match status" value="1"/>
</dbReference>
<dbReference type="PANTHER" id="PTHR11469">
    <property type="entry name" value="GLUCOSE-6-PHOSPHATE ISOMERASE"/>
    <property type="match status" value="1"/>
</dbReference>
<dbReference type="PANTHER" id="PTHR11469:SF1">
    <property type="entry name" value="GLUCOSE-6-PHOSPHATE ISOMERASE"/>
    <property type="match status" value="1"/>
</dbReference>
<dbReference type="Pfam" id="PF00342">
    <property type="entry name" value="PGI"/>
    <property type="match status" value="1"/>
</dbReference>
<dbReference type="PRINTS" id="PR00662">
    <property type="entry name" value="G6PISOMERASE"/>
</dbReference>
<dbReference type="SUPFAM" id="SSF53697">
    <property type="entry name" value="SIS domain"/>
    <property type="match status" value="1"/>
</dbReference>
<dbReference type="PROSITE" id="PS00765">
    <property type="entry name" value="P_GLUCOSE_ISOMERASE_1"/>
    <property type="match status" value="1"/>
</dbReference>
<dbReference type="PROSITE" id="PS00174">
    <property type="entry name" value="P_GLUCOSE_ISOMERASE_2"/>
    <property type="match status" value="1"/>
</dbReference>
<dbReference type="PROSITE" id="PS51463">
    <property type="entry name" value="P_GLUCOSE_ISOMERASE_3"/>
    <property type="match status" value="1"/>
</dbReference>
<organism>
    <name type="scientific">Alkaliphilus metalliredigens (strain QYMF)</name>
    <dbReference type="NCBI Taxonomy" id="293826"/>
    <lineage>
        <taxon>Bacteria</taxon>
        <taxon>Bacillati</taxon>
        <taxon>Bacillota</taxon>
        <taxon>Clostridia</taxon>
        <taxon>Peptostreptococcales</taxon>
        <taxon>Natronincolaceae</taxon>
        <taxon>Alkaliphilus</taxon>
    </lineage>
</organism>
<gene>
    <name evidence="1" type="primary">pgi</name>
    <name type="ordered locus">Amet_1375</name>
</gene>
<sequence>MSGIRFDYSKASGYINTHELDYLGKMTETAHQLLHEKTGAGNEFLGWLDLPKNYDQDEFQRVQNCAEKIKNDSDVLIVIGIGGSYLGSRAAIEMLTHTFHNSLPKDKRQGPEVYFAGHNISSTYLKHLLDIIEGKDISLNVISKSGTTTEPALAFRVLKEYMEKKYGKEETTKRIYATTDQAKGALKQLADEEGYESFIIPDDVGGRFSVLTAVGLLPIAAAGINIEEVMQGAKQALQDFNHSNIDKNSCYQYAIVRNALYRKGKTTEIMVNYEPALHYIGEWWKQLFGESEGKDQKGIFPASVSFSTDLHSMGQYIQEGMRNIFETVLHVENTQEKMIIQPTDADLDGLNYLAGKTVDFVNEKAFEGTLLAHTDGGVPNLIIHIPEITPYYFGYLVYFFEKACAISGYLLGVNPFDQPGVEAYKKNMFALLGKPGFEEAQRELQKRLEK</sequence>
<evidence type="ECO:0000255" key="1">
    <source>
        <dbReference type="HAMAP-Rule" id="MF_00473"/>
    </source>
</evidence>
<keyword id="KW-0963">Cytoplasm</keyword>
<keyword id="KW-0312">Gluconeogenesis</keyword>
<keyword id="KW-0324">Glycolysis</keyword>
<keyword id="KW-0413">Isomerase</keyword>
<keyword id="KW-1185">Reference proteome</keyword>
<comment type="function">
    <text evidence="1">Catalyzes the reversible isomerization of glucose-6-phosphate to fructose-6-phosphate.</text>
</comment>
<comment type="catalytic activity">
    <reaction evidence="1">
        <text>alpha-D-glucose 6-phosphate = beta-D-fructose 6-phosphate</text>
        <dbReference type="Rhea" id="RHEA:11816"/>
        <dbReference type="ChEBI" id="CHEBI:57634"/>
        <dbReference type="ChEBI" id="CHEBI:58225"/>
        <dbReference type="EC" id="5.3.1.9"/>
    </reaction>
</comment>
<comment type="pathway">
    <text evidence="1">Carbohydrate biosynthesis; gluconeogenesis.</text>
</comment>
<comment type="pathway">
    <text evidence="1">Carbohydrate degradation; glycolysis; D-glyceraldehyde 3-phosphate and glycerone phosphate from D-glucose: step 2/4.</text>
</comment>
<comment type="subcellular location">
    <subcellularLocation>
        <location evidence="1">Cytoplasm</location>
    </subcellularLocation>
</comment>
<comment type="similarity">
    <text evidence="1">Belongs to the GPI family.</text>
</comment>
<proteinExistence type="inferred from homology"/>
<reference key="1">
    <citation type="journal article" date="2016" name="Genome Announc.">
        <title>Complete genome sequence of Alkaliphilus metalliredigens strain QYMF, an alkaliphilic and metal-reducing bacterium isolated from borax-contaminated leachate ponds.</title>
        <authorList>
            <person name="Hwang C."/>
            <person name="Copeland A."/>
            <person name="Lucas S."/>
            <person name="Lapidus A."/>
            <person name="Barry K."/>
            <person name="Detter J.C."/>
            <person name="Glavina Del Rio T."/>
            <person name="Hammon N."/>
            <person name="Israni S."/>
            <person name="Dalin E."/>
            <person name="Tice H."/>
            <person name="Pitluck S."/>
            <person name="Chertkov O."/>
            <person name="Brettin T."/>
            <person name="Bruce D."/>
            <person name="Han C."/>
            <person name="Schmutz J."/>
            <person name="Larimer F."/>
            <person name="Land M.L."/>
            <person name="Hauser L."/>
            <person name="Kyrpides N."/>
            <person name="Mikhailova N."/>
            <person name="Ye Q."/>
            <person name="Zhou J."/>
            <person name="Richardson P."/>
            <person name="Fields M.W."/>
        </authorList>
    </citation>
    <scope>NUCLEOTIDE SEQUENCE [LARGE SCALE GENOMIC DNA]</scope>
    <source>
        <strain>QYMF</strain>
    </source>
</reference>